<reference evidence="10" key="1">
    <citation type="journal article" date="1997" name="J. Exp. Biol.">
        <title>Three opsin-encoding cDNAS from the compound eye of Manduca sexta.</title>
        <authorList>
            <person name="Chase M.R."/>
            <person name="Bennett R.R."/>
            <person name="White R.H."/>
        </authorList>
    </citation>
    <scope>NUCLEOTIDE SEQUENCE [MRNA]</scope>
    <source>
        <tissue evidence="10">Retina</tissue>
    </source>
</reference>
<reference evidence="9" key="2">
    <citation type="journal article" date="2003" name="J. Exp. Biol.">
        <title>The retina of Manduca sexta: rhodopsin expression, the mosaic of green-, blue- and UV-sensitive photoreceptors, and regional specialization.</title>
        <authorList>
            <person name="White R.H."/>
            <person name="Xu H."/>
            <person name="Munch T.A."/>
            <person name="Bennett R.R."/>
            <person name="Grable E.A."/>
        </authorList>
    </citation>
    <scope>TISSUE SPECIFICITY</scope>
    <source>
        <tissue evidence="6">Retina</tissue>
    </source>
</reference>
<name>OPS1_MANSE</name>
<dbReference type="EMBL" id="L78080">
    <property type="protein sequence ID" value="AAD11964.1"/>
    <property type="molecule type" value="mRNA"/>
</dbReference>
<dbReference type="SMR" id="O02464"/>
<dbReference type="GlyCosmos" id="O02464">
    <property type="glycosylation" value="2 sites, No reported glycans"/>
</dbReference>
<dbReference type="OrthoDB" id="9996086at2759"/>
<dbReference type="GO" id="GO:0033583">
    <property type="term" value="C:rhabdomere membrane"/>
    <property type="evidence" value="ECO:0007669"/>
    <property type="project" value="UniProtKB-SubCell"/>
</dbReference>
<dbReference type="GO" id="GO:0004930">
    <property type="term" value="F:G protein-coupled receptor activity"/>
    <property type="evidence" value="ECO:0007669"/>
    <property type="project" value="UniProtKB-KW"/>
</dbReference>
<dbReference type="GO" id="GO:0009881">
    <property type="term" value="F:photoreceptor activity"/>
    <property type="evidence" value="ECO:0007669"/>
    <property type="project" value="UniProtKB-KW"/>
</dbReference>
<dbReference type="GO" id="GO:0007602">
    <property type="term" value="P:phototransduction"/>
    <property type="evidence" value="ECO:0007669"/>
    <property type="project" value="UniProtKB-KW"/>
</dbReference>
<dbReference type="GO" id="GO:0007601">
    <property type="term" value="P:visual perception"/>
    <property type="evidence" value="ECO:0007669"/>
    <property type="project" value="UniProtKB-KW"/>
</dbReference>
<dbReference type="CDD" id="cd15079">
    <property type="entry name" value="7tmA_photoreceptors_insect"/>
    <property type="match status" value="1"/>
</dbReference>
<dbReference type="FunFam" id="1.20.1070.10:FF:000044">
    <property type="entry name" value="Opsin, ultraviolet-sensitive"/>
    <property type="match status" value="1"/>
</dbReference>
<dbReference type="Gene3D" id="1.20.1070.10">
    <property type="entry name" value="Rhodopsin 7-helix transmembrane proteins"/>
    <property type="match status" value="1"/>
</dbReference>
<dbReference type="InterPro" id="IPR050125">
    <property type="entry name" value="GPCR_opsins"/>
</dbReference>
<dbReference type="InterPro" id="IPR000276">
    <property type="entry name" value="GPCR_Rhodpsn"/>
</dbReference>
<dbReference type="InterPro" id="IPR017452">
    <property type="entry name" value="GPCR_Rhodpsn_7TM"/>
</dbReference>
<dbReference type="InterPro" id="IPR001760">
    <property type="entry name" value="Opsin"/>
</dbReference>
<dbReference type="InterPro" id="IPR001391">
    <property type="entry name" value="Opsin_lateye"/>
</dbReference>
<dbReference type="InterPro" id="IPR027430">
    <property type="entry name" value="Retinal_BS"/>
</dbReference>
<dbReference type="PANTHER" id="PTHR24240">
    <property type="entry name" value="OPSIN"/>
    <property type="match status" value="1"/>
</dbReference>
<dbReference type="Pfam" id="PF00001">
    <property type="entry name" value="7tm_1"/>
    <property type="match status" value="1"/>
</dbReference>
<dbReference type="PRINTS" id="PR00237">
    <property type="entry name" value="GPCRRHODOPSN"/>
</dbReference>
<dbReference type="PRINTS" id="PR00238">
    <property type="entry name" value="OPSIN"/>
</dbReference>
<dbReference type="PRINTS" id="PR00578">
    <property type="entry name" value="OPSINLTRLEYE"/>
</dbReference>
<dbReference type="SUPFAM" id="SSF81321">
    <property type="entry name" value="Family A G protein-coupled receptor-like"/>
    <property type="match status" value="1"/>
</dbReference>
<dbReference type="PROSITE" id="PS00237">
    <property type="entry name" value="G_PROTEIN_RECEP_F1_1"/>
    <property type="match status" value="1"/>
</dbReference>
<dbReference type="PROSITE" id="PS50262">
    <property type="entry name" value="G_PROTEIN_RECEP_F1_2"/>
    <property type="match status" value="1"/>
</dbReference>
<dbReference type="PROSITE" id="PS00238">
    <property type="entry name" value="OPSIN"/>
    <property type="match status" value="1"/>
</dbReference>
<gene>
    <name type="primary">OP1</name>
</gene>
<accession>O02464</accession>
<protein>
    <recommendedName>
        <fullName>Opsin-1</fullName>
        <shortName evidence="8">MANOP1</shortName>
    </recommendedName>
    <alternativeName>
        <fullName evidence="8">Rhodopsin 1, long-wavelength</fullName>
    </alternativeName>
    <alternativeName>
        <fullName evidence="7">Rhodopsin P520</fullName>
    </alternativeName>
</protein>
<feature type="chain" id="PRO_0000389622" description="Opsin-1">
    <location>
        <begin position="1"/>
        <end position="377"/>
    </location>
</feature>
<feature type="topological domain" description="Extracellular" evidence="3">
    <location>
        <begin position="1"/>
        <end position="58"/>
    </location>
</feature>
<feature type="transmembrane region" description="Helical; Name=1" evidence="3">
    <location>
        <begin position="59"/>
        <end position="79"/>
    </location>
</feature>
<feature type="topological domain" description="Cytoplasmic" evidence="3">
    <location>
        <begin position="80"/>
        <end position="92"/>
    </location>
</feature>
<feature type="transmembrane region" description="Helical; Name=2" evidence="3">
    <location>
        <begin position="93"/>
        <end position="113"/>
    </location>
</feature>
<feature type="topological domain" description="Extracellular" evidence="3">
    <location>
        <begin position="114"/>
        <end position="129"/>
    </location>
</feature>
<feature type="transmembrane region" description="Helical; Name=3" evidence="3">
    <location>
        <begin position="130"/>
        <end position="150"/>
    </location>
</feature>
<feature type="topological domain" description="Cytoplasmic" evidence="3">
    <location>
        <begin position="151"/>
        <end position="169"/>
    </location>
</feature>
<feature type="transmembrane region" description="Helical; Name=4" evidence="3">
    <location>
        <begin position="170"/>
        <end position="190"/>
    </location>
</feature>
<feature type="topological domain" description="Extracellular" evidence="3">
    <location>
        <begin position="191"/>
        <end position="220"/>
    </location>
</feature>
<feature type="transmembrane region" description="Helical; Name=5" evidence="3">
    <location>
        <begin position="221"/>
        <end position="241"/>
    </location>
</feature>
<feature type="topological domain" description="Cytoplasmic" evidence="3">
    <location>
        <begin position="242"/>
        <end position="280"/>
    </location>
</feature>
<feature type="transmembrane region" description="Helical; Name=6" evidence="3">
    <location>
        <begin position="281"/>
        <end position="301"/>
    </location>
</feature>
<feature type="topological domain" description="Extracellular" evidence="3">
    <location>
        <begin position="302"/>
        <end position="312"/>
    </location>
</feature>
<feature type="transmembrane region" description="Helical; Name=7" evidence="3">
    <location>
        <begin position="313"/>
        <end position="335"/>
    </location>
</feature>
<feature type="topological domain" description="Cytoplasmic" evidence="3">
    <location>
        <begin position="336"/>
        <end position="377"/>
    </location>
</feature>
<feature type="region of interest" description="Disordered" evidence="5">
    <location>
        <begin position="357"/>
        <end position="377"/>
    </location>
</feature>
<feature type="glycosylation site" description="N-linked (GlcNAc...) asparagine" evidence="3">
    <location>
        <position position="24"/>
    </location>
</feature>
<feature type="glycosylation site" description="N-linked (GlcNAc...) asparagine" evidence="3">
    <location>
        <position position="200"/>
    </location>
</feature>
<feature type="disulfide bond" evidence="4">
    <location>
        <begin position="127"/>
        <end position="204"/>
    </location>
</feature>
<comment type="function">
    <text evidence="2 9">Visual pigments are the light-absorbing molecules that mediate vision. They consist of an apoprotein, opsin, covalently linked to cis-retinal. May play a role in photoperiodic photoreception.</text>
</comment>
<comment type="subcellular location">
    <subcellularLocation>
        <location evidence="1">Cell projection</location>
        <location evidence="1">Rhabdomere membrane</location>
        <topology evidence="9">Multi-pass membrane protein</topology>
    </subcellularLocation>
</comment>
<comment type="tissue specificity">
    <text evidence="6">In the retina, expression is abundant and uniform in the anterior-posterior and oblique cells of the retinulae, with some expression in the proximal cells. There is no expression in the dorsal rim retinulae (at protein level).</text>
</comment>
<comment type="similarity">
    <text evidence="4">Belongs to the G-protein coupled receptor 1 family. Opsin subfamily.</text>
</comment>
<sequence length="377" mass="41432">MDPGPGLAALQAWAAKSPAYGAANQTVVDKVPPDMMHMIDPHWYQFPPMNPLWHALLGFTIGVLGFVSISGNGMVIYIFMSTKSLKTPSNLLVVNLAFSDFLMMCAMSPAMVVNCYYETWVWGPFACELYACAGSLFGCASIWTMTMIAFDRYNVIVKGIAAKPMTSNGALLRILGIWVFSLAWTLLPFFGWNRYVPEGNMTACGTDYLSKSWVSRSYILIYSVFVYFLPLLLIIYSYFFIVQAVAAHEKAMREQAKKMNVASLRSSEAANTSAECKLAKVALMTISLWFMAWTPYLVINYTGVFESAPISPLATIWGSLFAKANAVYNPIVYGISHPKYQAALYAKFPSLQCQSAPEDAGSVASGTTAVSEEKPAA</sequence>
<organism>
    <name type="scientific">Manduca sexta</name>
    <name type="common">Tobacco hawkmoth</name>
    <name type="synonym">Tobacco hornworm</name>
    <dbReference type="NCBI Taxonomy" id="7130"/>
    <lineage>
        <taxon>Eukaryota</taxon>
        <taxon>Metazoa</taxon>
        <taxon>Ecdysozoa</taxon>
        <taxon>Arthropoda</taxon>
        <taxon>Hexapoda</taxon>
        <taxon>Insecta</taxon>
        <taxon>Pterygota</taxon>
        <taxon>Neoptera</taxon>
        <taxon>Endopterygota</taxon>
        <taxon>Lepidoptera</taxon>
        <taxon>Glossata</taxon>
        <taxon>Ditrysia</taxon>
        <taxon>Bombycoidea</taxon>
        <taxon>Sphingidae</taxon>
        <taxon>Sphinginae</taxon>
        <taxon>Sphingini</taxon>
        <taxon>Manduca</taxon>
    </lineage>
</organism>
<keyword id="KW-1003">Cell membrane</keyword>
<keyword id="KW-0966">Cell projection</keyword>
<keyword id="KW-0157">Chromophore</keyword>
<keyword id="KW-1015">Disulfide bond</keyword>
<keyword id="KW-0297">G-protein coupled receptor</keyword>
<keyword id="KW-0325">Glycoprotein</keyword>
<keyword id="KW-0472">Membrane</keyword>
<keyword id="KW-0600">Photoreceptor protein</keyword>
<keyword id="KW-0675">Receptor</keyword>
<keyword id="KW-0681">Retinal protein</keyword>
<keyword id="KW-0716">Sensory transduction</keyword>
<keyword id="KW-0807">Transducer</keyword>
<keyword id="KW-0812">Transmembrane</keyword>
<keyword id="KW-1133">Transmembrane helix</keyword>
<keyword id="KW-0844">Vision</keyword>
<evidence type="ECO:0000250" key="1">
    <source>
        <dbReference type="UniProtKB" id="P06002"/>
    </source>
</evidence>
<evidence type="ECO:0000250" key="2">
    <source>
        <dbReference type="UniProtKB" id="Q95YI3"/>
    </source>
</evidence>
<evidence type="ECO:0000255" key="3"/>
<evidence type="ECO:0000255" key="4">
    <source>
        <dbReference type="PROSITE-ProRule" id="PRU00521"/>
    </source>
</evidence>
<evidence type="ECO:0000256" key="5">
    <source>
        <dbReference type="SAM" id="MobiDB-lite"/>
    </source>
</evidence>
<evidence type="ECO:0000269" key="6">
    <source>
    </source>
</evidence>
<evidence type="ECO:0000303" key="7">
    <source>
    </source>
</evidence>
<evidence type="ECO:0000303" key="8">
    <source>
    </source>
</evidence>
<evidence type="ECO:0000305" key="9"/>
<evidence type="ECO:0000312" key="10">
    <source>
        <dbReference type="EMBL" id="AAD11964.1"/>
    </source>
</evidence>
<proteinExistence type="evidence at protein level"/>